<sequence length="491" mass="54396">MAENLAALDDDEAELRAATLRAGLDDYDLDEEDAALLSGEYGDEGDEGPLKLDPVLAIIGRPNVGKSTLVNRILGRREAVVEDTPGVTRDRVMYSARWNGRNFTLVDTGGWEHDAKGIHARVAEQAEMAVELADAVLFVVDSAVGATATDEGVMKMLRKSKKPVIMVANKVDDFAQEADSATLWGLGFGEPYPVSALHGRGVADLLDHVMDTLPEYSLVDGVERSGGPRRIALIGRPNVGKSSLLNKLAGSERVVVDPLAGTTRDPVDEFIELGDRTWRFVDTAGIRRRQHMAQGADFYASLRTQAALEKAEVAVVLLAVDEVLSEQDVRILQLAIESGRALVLAFNKWDLLDDERRRYLEREIEQDLAHVEWAPRVNISAKTGWHKDRLVPALDIALESWDRRIPTGRLNAFLGELVAAHPHPVRGGKQPRILFGTQASSRPPKFVLFTTGFLDPGYRRFITRRLRETFGFEGTPIEVNMRVREKRGKKR</sequence>
<protein>
    <recommendedName>
        <fullName evidence="1">GTPase Der</fullName>
    </recommendedName>
    <alternativeName>
        <fullName evidence="1">GTP-binding protein EngA</fullName>
    </alternativeName>
</protein>
<gene>
    <name evidence="1" type="primary">der</name>
    <name type="synonym">engA</name>
    <name type="ordered locus">AAur_1676</name>
</gene>
<feature type="chain" id="PRO_1000124338" description="GTPase Der">
    <location>
        <begin position="1"/>
        <end position="491"/>
    </location>
</feature>
<feature type="domain" description="EngA-type G 1">
    <location>
        <begin position="54"/>
        <end position="217"/>
    </location>
</feature>
<feature type="domain" description="EngA-type G 2">
    <location>
        <begin position="229"/>
        <end position="402"/>
    </location>
</feature>
<feature type="domain" description="KH-like" evidence="1">
    <location>
        <begin position="403"/>
        <end position="485"/>
    </location>
</feature>
<feature type="binding site" evidence="1">
    <location>
        <begin position="60"/>
        <end position="67"/>
    </location>
    <ligand>
        <name>GTP</name>
        <dbReference type="ChEBI" id="CHEBI:37565"/>
        <label>1</label>
    </ligand>
</feature>
<feature type="binding site" evidence="1">
    <location>
        <begin position="107"/>
        <end position="111"/>
    </location>
    <ligand>
        <name>GTP</name>
        <dbReference type="ChEBI" id="CHEBI:37565"/>
        <label>1</label>
    </ligand>
</feature>
<feature type="binding site" evidence="1">
    <location>
        <begin position="169"/>
        <end position="172"/>
    </location>
    <ligand>
        <name>GTP</name>
        <dbReference type="ChEBI" id="CHEBI:37565"/>
        <label>1</label>
    </ligand>
</feature>
<feature type="binding site" evidence="1">
    <location>
        <begin position="235"/>
        <end position="242"/>
    </location>
    <ligand>
        <name>GTP</name>
        <dbReference type="ChEBI" id="CHEBI:37565"/>
        <label>2</label>
    </ligand>
</feature>
<feature type="binding site" evidence="1">
    <location>
        <begin position="282"/>
        <end position="286"/>
    </location>
    <ligand>
        <name>GTP</name>
        <dbReference type="ChEBI" id="CHEBI:37565"/>
        <label>2</label>
    </ligand>
</feature>
<feature type="binding site" evidence="1">
    <location>
        <begin position="347"/>
        <end position="350"/>
    </location>
    <ligand>
        <name>GTP</name>
        <dbReference type="ChEBI" id="CHEBI:37565"/>
        <label>2</label>
    </ligand>
</feature>
<evidence type="ECO:0000255" key="1">
    <source>
        <dbReference type="HAMAP-Rule" id="MF_00195"/>
    </source>
</evidence>
<accession>A1R5C7</accession>
<name>DER_PAEAT</name>
<dbReference type="EMBL" id="CP000474">
    <property type="protein sequence ID" value="ABM09891.1"/>
    <property type="molecule type" value="Genomic_DNA"/>
</dbReference>
<dbReference type="SMR" id="A1R5C7"/>
<dbReference type="STRING" id="290340.AAur_1676"/>
<dbReference type="KEGG" id="aau:AAur_1676"/>
<dbReference type="eggNOG" id="COG1160">
    <property type="taxonomic scope" value="Bacteria"/>
</dbReference>
<dbReference type="HOGENOM" id="CLU_016077_5_0_11"/>
<dbReference type="Proteomes" id="UP000000637">
    <property type="component" value="Chromosome"/>
</dbReference>
<dbReference type="GO" id="GO:0016887">
    <property type="term" value="F:ATP hydrolysis activity"/>
    <property type="evidence" value="ECO:0007669"/>
    <property type="project" value="InterPro"/>
</dbReference>
<dbReference type="GO" id="GO:0005525">
    <property type="term" value="F:GTP binding"/>
    <property type="evidence" value="ECO:0007669"/>
    <property type="project" value="UniProtKB-UniRule"/>
</dbReference>
<dbReference type="GO" id="GO:0043022">
    <property type="term" value="F:ribosome binding"/>
    <property type="evidence" value="ECO:0007669"/>
    <property type="project" value="TreeGrafter"/>
</dbReference>
<dbReference type="GO" id="GO:0042254">
    <property type="term" value="P:ribosome biogenesis"/>
    <property type="evidence" value="ECO:0007669"/>
    <property type="project" value="UniProtKB-KW"/>
</dbReference>
<dbReference type="CDD" id="cd01894">
    <property type="entry name" value="EngA1"/>
    <property type="match status" value="1"/>
</dbReference>
<dbReference type="CDD" id="cd01895">
    <property type="entry name" value="EngA2"/>
    <property type="match status" value="1"/>
</dbReference>
<dbReference type="FunFam" id="3.30.300.20:FF:000004">
    <property type="entry name" value="GTPase Der"/>
    <property type="match status" value="1"/>
</dbReference>
<dbReference type="FunFam" id="3.40.50.300:FF:000040">
    <property type="entry name" value="GTPase Der"/>
    <property type="match status" value="1"/>
</dbReference>
<dbReference type="FunFam" id="3.40.50.300:FF:000057">
    <property type="entry name" value="GTPase Der"/>
    <property type="match status" value="1"/>
</dbReference>
<dbReference type="Gene3D" id="3.30.300.20">
    <property type="match status" value="1"/>
</dbReference>
<dbReference type="Gene3D" id="3.40.50.300">
    <property type="entry name" value="P-loop containing nucleotide triphosphate hydrolases"/>
    <property type="match status" value="2"/>
</dbReference>
<dbReference type="HAMAP" id="MF_00195">
    <property type="entry name" value="GTPase_Der"/>
    <property type="match status" value="1"/>
</dbReference>
<dbReference type="InterPro" id="IPR003593">
    <property type="entry name" value="AAA+_ATPase"/>
</dbReference>
<dbReference type="InterPro" id="IPR031166">
    <property type="entry name" value="G_ENGA"/>
</dbReference>
<dbReference type="InterPro" id="IPR006073">
    <property type="entry name" value="GTP-bd"/>
</dbReference>
<dbReference type="InterPro" id="IPR016484">
    <property type="entry name" value="GTPase_Der"/>
</dbReference>
<dbReference type="InterPro" id="IPR032859">
    <property type="entry name" value="KH_dom-like"/>
</dbReference>
<dbReference type="InterPro" id="IPR015946">
    <property type="entry name" value="KH_dom-like_a/b"/>
</dbReference>
<dbReference type="InterPro" id="IPR027417">
    <property type="entry name" value="P-loop_NTPase"/>
</dbReference>
<dbReference type="InterPro" id="IPR005225">
    <property type="entry name" value="Small_GTP-bd"/>
</dbReference>
<dbReference type="NCBIfam" id="TIGR03594">
    <property type="entry name" value="GTPase_EngA"/>
    <property type="match status" value="1"/>
</dbReference>
<dbReference type="NCBIfam" id="NF002828">
    <property type="entry name" value="PRK03003.1"/>
    <property type="match status" value="1"/>
</dbReference>
<dbReference type="NCBIfam" id="TIGR00231">
    <property type="entry name" value="small_GTP"/>
    <property type="match status" value="2"/>
</dbReference>
<dbReference type="PANTHER" id="PTHR43834">
    <property type="entry name" value="GTPASE DER"/>
    <property type="match status" value="1"/>
</dbReference>
<dbReference type="PANTHER" id="PTHR43834:SF6">
    <property type="entry name" value="GTPASE DER"/>
    <property type="match status" value="1"/>
</dbReference>
<dbReference type="Pfam" id="PF14714">
    <property type="entry name" value="KH_dom-like"/>
    <property type="match status" value="1"/>
</dbReference>
<dbReference type="Pfam" id="PF01926">
    <property type="entry name" value="MMR_HSR1"/>
    <property type="match status" value="2"/>
</dbReference>
<dbReference type="PIRSF" id="PIRSF006485">
    <property type="entry name" value="GTP-binding_EngA"/>
    <property type="match status" value="1"/>
</dbReference>
<dbReference type="PRINTS" id="PR00326">
    <property type="entry name" value="GTP1OBG"/>
</dbReference>
<dbReference type="SMART" id="SM00382">
    <property type="entry name" value="AAA"/>
    <property type="match status" value="2"/>
</dbReference>
<dbReference type="SUPFAM" id="SSF52540">
    <property type="entry name" value="P-loop containing nucleoside triphosphate hydrolases"/>
    <property type="match status" value="2"/>
</dbReference>
<dbReference type="PROSITE" id="PS51712">
    <property type="entry name" value="G_ENGA"/>
    <property type="match status" value="2"/>
</dbReference>
<organism>
    <name type="scientific">Paenarthrobacter aurescens (strain TC1)</name>
    <dbReference type="NCBI Taxonomy" id="290340"/>
    <lineage>
        <taxon>Bacteria</taxon>
        <taxon>Bacillati</taxon>
        <taxon>Actinomycetota</taxon>
        <taxon>Actinomycetes</taxon>
        <taxon>Micrococcales</taxon>
        <taxon>Micrococcaceae</taxon>
        <taxon>Paenarthrobacter</taxon>
    </lineage>
</organism>
<reference key="1">
    <citation type="journal article" date="2006" name="PLoS Genet.">
        <title>Secrets of soil survival revealed by the genome sequence of Arthrobacter aurescens TC1.</title>
        <authorList>
            <person name="Mongodin E.F."/>
            <person name="Shapir N."/>
            <person name="Daugherty S.C."/>
            <person name="DeBoy R.T."/>
            <person name="Emerson J.B."/>
            <person name="Shvartzbeyn A."/>
            <person name="Radune D."/>
            <person name="Vamathevan J."/>
            <person name="Riggs F."/>
            <person name="Grinberg V."/>
            <person name="Khouri H.M."/>
            <person name="Wackett L.P."/>
            <person name="Nelson K.E."/>
            <person name="Sadowsky M.J."/>
        </authorList>
    </citation>
    <scope>NUCLEOTIDE SEQUENCE [LARGE SCALE GENOMIC DNA]</scope>
    <source>
        <strain>TC1</strain>
    </source>
</reference>
<proteinExistence type="inferred from homology"/>
<comment type="function">
    <text evidence="1">GTPase that plays an essential role in the late steps of ribosome biogenesis.</text>
</comment>
<comment type="subunit">
    <text evidence="1">Associates with the 50S ribosomal subunit.</text>
</comment>
<comment type="similarity">
    <text evidence="1">Belongs to the TRAFAC class TrmE-Era-EngA-EngB-Septin-like GTPase superfamily. EngA (Der) GTPase family.</text>
</comment>
<keyword id="KW-0342">GTP-binding</keyword>
<keyword id="KW-0547">Nucleotide-binding</keyword>
<keyword id="KW-0677">Repeat</keyword>
<keyword id="KW-0690">Ribosome biogenesis</keyword>